<reference key="1">
    <citation type="journal article" date="2002" name="J. Bacteriol.">
        <title>Whole-genome comparison of Mycobacterium tuberculosis clinical and laboratory strains.</title>
        <authorList>
            <person name="Fleischmann R.D."/>
            <person name="Alland D."/>
            <person name="Eisen J.A."/>
            <person name="Carpenter L."/>
            <person name="White O."/>
            <person name="Peterson J.D."/>
            <person name="DeBoy R.T."/>
            <person name="Dodson R.J."/>
            <person name="Gwinn M.L."/>
            <person name="Haft D.H."/>
            <person name="Hickey E.K."/>
            <person name="Kolonay J.F."/>
            <person name="Nelson W.C."/>
            <person name="Umayam L.A."/>
            <person name="Ermolaeva M.D."/>
            <person name="Salzberg S.L."/>
            <person name="Delcher A."/>
            <person name="Utterback T.R."/>
            <person name="Weidman J.F."/>
            <person name="Khouri H.M."/>
            <person name="Gill J."/>
            <person name="Mikula A."/>
            <person name="Bishai W."/>
            <person name="Jacobs W.R. Jr."/>
            <person name="Venter J.C."/>
            <person name="Fraser C.M."/>
        </authorList>
    </citation>
    <scope>NUCLEOTIDE SEQUENCE [LARGE SCALE GENOMIC DNA]</scope>
    <source>
        <strain>CDC 1551 / Oshkosh</strain>
    </source>
</reference>
<organism>
    <name type="scientific">Mycobacterium tuberculosis (strain CDC 1551 / Oshkosh)</name>
    <dbReference type="NCBI Taxonomy" id="83331"/>
    <lineage>
        <taxon>Bacteria</taxon>
        <taxon>Bacillati</taxon>
        <taxon>Actinomycetota</taxon>
        <taxon>Actinomycetes</taxon>
        <taxon>Mycobacteriales</taxon>
        <taxon>Mycobacteriaceae</taxon>
        <taxon>Mycobacterium</taxon>
        <taxon>Mycobacterium tuberculosis complex</taxon>
    </lineage>
</organism>
<gene>
    <name type="primary">dnaX</name>
    <name type="synonym">dnaZX</name>
    <name type="ordered locus">MT3824</name>
</gene>
<feature type="chain" id="PRO_0000427069" description="DNA polymerase III subunit gamma/tau">
    <location>
        <begin position="1"/>
        <end position="578"/>
    </location>
</feature>
<feature type="region of interest" description="Disordered" evidence="4">
    <location>
        <begin position="389"/>
        <end position="423"/>
    </location>
</feature>
<feature type="region of interest" description="Disordered" evidence="4">
    <location>
        <begin position="525"/>
        <end position="559"/>
    </location>
</feature>
<feature type="compositionally biased region" description="Basic and acidic residues" evidence="4">
    <location>
        <begin position="402"/>
        <end position="412"/>
    </location>
</feature>
<feature type="compositionally biased region" description="Basic and acidic residues" evidence="4">
    <location>
        <begin position="536"/>
        <end position="559"/>
    </location>
</feature>
<feature type="binding site" evidence="3">
    <location>
        <begin position="42"/>
        <end position="49"/>
    </location>
    <ligand>
        <name>ATP</name>
        <dbReference type="ChEBI" id="CHEBI:30616"/>
    </ligand>
</feature>
<feature type="binding site" evidence="2">
    <location>
        <position position="61"/>
    </location>
    <ligand>
        <name>Zn(2+)</name>
        <dbReference type="ChEBI" id="CHEBI:29105"/>
    </ligand>
</feature>
<feature type="binding site" evidence="2">
    <location>
        <position position="70"/>
    </location>
    <ligand>
        <name>Zn(2+)</name>
        <dbReference type="ChEBI" id="CHEBI:29105"/>
    </ligand>
</feature>
<feature type="binding site" evidence="2">
    <location>
        <position position="73"/>
    </location>
    <ligand>
        <name>Zn(2+)</name>
        <dbReference type="ChEBI" id="CHEBI:29105"/>
    </ligand>
</feature>
<feature type="binding site" evidence="2">
    <location>
        <position position="76"/>
    </location>
    <ligand>
        <name>Zn(2+)</name>
        <dbReference type="ChEBI" id="CHEBI:29105"/>
    </ligand>
</feature>
<keyword id="KW-0067">ATP-binding</keyword>
<keyword id="KW-0235">DNA replication</keyword>
<keyword id="KW-0239">DNA-directed DNA polymerase</keyword>
<keyword id="KW-0479">Metal-binding</keyword>
<keyword id="KW-0547">Nucleotide-binding</keyword>
<keyword id="KW-0548">Nucleotidyltransferase</keyword>
<keyword id="KW-1185">Reference proteome</keyword>
<keyword id="KW-0808">Transferase</keyword>
<keyword id="KW-0862">Zinc</keyword>
<evidence type="ECO:0000250" key="1"/>
<evidence type="ECO:0000250" key="2">
    <source>
        <dbReference type="UniProtKB" id="P06710"/>
    </source>
</evidence>
<evidence type="ECO:0000255" key="3"/>
<evidence type="ECO:0000256" key="4">
    <source>
        <dbReference type="SAM" id="MobiDB-lite"/>
    </source>
</evidence>
<evidence type="ECO:0000305" key="5"/>
<dbReference type="EC" id="2.7.7.7"/>
<dbReference type="EMBL" id="AE000516">
    <property type="protein sequence ID" value="AAK48193.1"/>
    <property type="molecule type" value="Genomic_DNA"/>
</dbReference>
<dbReference type="PIR" id="B70796">
    <property type="entry name" value="B70796"/>
</dbReference>
<dbReference type="RefSeq" id="WP_003420417.1">
    <property type="nucleotide sequence ID" value="NZ_KK341227.1"/>
</dbReference>
<dbReference type="SMR" id="P9WNT8"/>
<dbReference type="KEGG" id="mtc:MT3824"/>
<dbReference type="PATRIC" id="fig|83331.31.peg.4117"/>
<dbReference type="HOGENOM" id="CLU_006229_3_5_11"/>
<dbReference type="Proteomes" id="UP000001020">
    <property type="component" value="Chromosome"/>
</dbReference>
<dbReference type="GO" id="GO:0009360">
    <property type="term" value="C:DNA polymerase III complex"/>
    <property type="evidence" value="ECO:0007669"/>
    <property type="project" value="InterPro"/>
</dbReference>
<dbReference type="GO" id="GO:0005524">
    <property type="term" value="F:ATP binding"/>
    <property type="evidence" value="ECO:0007669"/>
    <property type="project" value="UniProtKB-KW"/>
</dbReference>
<dbReference type="GO" id="GO:0016887">
    <property type="term" value="F:ATP hydrolysis activity"/>
    <property type="evidence" value="ECO:0007669"/>
    <property type="project" value="InterPro"/>
</dbReference>
<dbReference type="GO" id="GO:0003677">
    <property type="term" value="F:DNA binding"/>
    <property type="evidence" value="ECO:0007669"/>
    <property type="project" value="InterPro"/>
</dbReference>
<dbReference type="GO" id="GO:0003887">
    <property type="term" value="F:DNA-directed DNA polymerase activity"/>
    <property type="evidence" value="ECO:0007669"/>
    <property type="project" value="UniProtKB-KW"/>
</dbReference>
<dbReference type="GO" id="GO:0046872">
    <property type="term" value="F:metal ion binding"/>
    <property type="evidence" value="ECO:0007669"/>
    <property type="project" value="UniProtKB-KW"/>
</dbReference>
<dbReference type="GO" id="GO:0006261">
    <property type="term" value="P:DNA-templated DNA replication"/>
    <property type="evidence" value="ECO:0007669"/>
    <property type="project" value="TreeGrafter"/>
</dbReference>
<dbReference type="CDD" id="cd00009">
    <property type="entry name" value="AAA"/>
    <property type="match status" value="1"/>
</dbReference>
<dbReference type="CDD" id="cd18137">
    <property type="entry name" value="HLD_clamp_pol_III_gamma_tau"/>
    <property type="match status" value="1"/>
</dbReference>
<dbReference type="FunFam" id="1.20.272.10:FF:000003">
    <property type="entry name" value="DNA polymerase III subunit gamma/tau"/>
    <property type="match status" value="1"/>
</dbReference>
<dbReference type="FunFam" id="3.40.50.300:FF:000014">
    <property type="entry name" value="DNA polymerase III subunit gamma/tau"/>
    <property type="match status" value="1"/>
</dbReference>
<dbReference type="Gene3D" id="1.10.8.60">
    <property type="match status" value="1"/>
</dbReference>
<dbReference type="Gene3D" id="1.20.272.10">
    <property type="match status" value="1"/>
</dbReference>
<dbReference type="Gene3D" id="3.40.50.300">
    <property type="entry name" value="P-loop containing nucleotide triphosphate hydrolases"/>
    <property type="match status" value="1"/>
</dbReference>
<dbReference type="InterPro" id="IPR003593">
    <property type="entry name" value="AAA+_ATPase"/>
</dbReference>
<dbReference type="InterPro" id="IPR008921">
    <property type="entry name" value="DNA_pol3_clamp-load_cplx_C"/>
</dbReference>
<dbReference type="InterPro" id="IPR022754">
    <property type="entry name" value="DNA_pol_III_gamma-3"/>
</dbReference>
<dbReference type="InterPro" id="IPR012763">
    <property type="entry name" value="DNA_pol_III_sug/sutau_N"/>
</dbReference>
<dbReference type="InterPro" id="IPR050238">
    <property type="entry name" value="DNA_Rep/Repair_Clamp_Loader"/>
</dbReference>
<dbReference type="InterPro" id="IPR045085">
    <property type="entry name" value="HLD_clamp_pol_III_gamma_tau"/>
</dbReference>
<dbReference type="InterPro" id="IPR027417">
    <property type="entry name" value="P-loop_NTPase"/>
</dbReference>
<dbReference type="NCBIfam" id="TIGR02397">
    <property type="entry name" value="dnaX_nterm"/>
    <property type="match status" value="1"/>
</dbReference>
<dbReference type="NCBIfam" id="NF005846">
    <property type="entry name" value="PRK07764.1-6"/>
    <property type="match status" value="1"/>
</dbReference>
<dbReference type="NCBIfam" id="NF011513">
    <property type="entry name" value="PRK14952.1"/>
    <property type="match status" value="1"/>
</dbReference>
<dbReference type="PANTHER" id="PTHR11669:SF0">
    <property type="entry name" value="PROTEIN STICHEL-LIKE 2"/>
    <property type="match status" value="1"/>
</dbReference>
<dbReference type="PANTHER" id="PTHR11669">
    <property type="entry name" value="REPLICATION FACTOR C / DNA POLYMERASE III GAMMA-TAU SUBUNIT"/>
    <property type="match status" value="1"/>
</dbReference>
<dbReference type="Pfam" id="PF13177">
    <property type="entry name" value="DNA_pol3_delta2"/>
    <property type="match status" value="1"/>
</dbReference>
<dbReference type="Pfam" id="PF12169">
    <property type="entry name" value="DNA_pol3_gamma3"/>
    <property type="match status" value="1"/>
</dbReference>
<dbReference type="Pfam" id="PF22608">
    <property type="entry name" value="DNAX_ATPase_lid"/>
    <property type="match status" value="1"/>
</dbReference>
<dbReference type="SMART" id="SM00382">
    <property type="entry name" value="AAA"/>
    <property type="match status" value="1"/>
</dbReference>
<dbReference type="SUPFAM" id="SSF52540">
    <property type="entry name" value="P-loop containing nucleoside triphosphate hydrolases"/>
    <property type="match status" value="1"/>
</dbReference>
<dbReference type="SUPFAM" id="SSF48019">
    <property type="entry name" value="post-AAA+ oligomerization domain-like"/>
    <property type="match status" value="1"/>
</dbReference>
<sequence length="578" mass="61923">MALYRKYRPASFAEVVGQEHVTAPLSVALDAGRINHAYLFSGPRGCGKTSSARILARSLNCAQGPTANPCGVCESCVSLAPNAPGSIDVVELDAASHGGVDDTRELRDRAFYAPVQSRYRVFIVDEAHMVTTAGFNALLKIVEEPPEHLIFIFATTEPEKVLPTIRSRTHHYPFRLLPPRTMRALLARICEQEGVVVDDAVYPLVIRAGGGSPRDTLSVLDQLLAGAADTHVTYTRALGLLGVTDVALIDDAVDALAACDAAALFGAIESVIDGGHDPRRFATDLLERFRDLIVLQSVPDAASRGVVDAPEDALDRMREQAARIGRATLTRYAEVVQAGLGEMRGATAPRLLLEVVCARLLLPSASDAESALLQRVERIETRLDMSIPAPQAVPRPSAAAAEPKHQPAREPRPVLAPTPASSEPTVAAVRSMWPTVRDKVRLRSRTTEVMLAGATVRALEDNTLVLTHESAPLARRLSEQRNADVLAEALKDALGVNWRVRCETGEPAAAASPVGGGANVATAKAVNPAPTANSTQRDEEEHMLAEAGRGDPSPRRDPEEVALELLQNELGARRIDNA</sequence>
<comment type="function">
    <text evidence="1">DNA polymerase III is a complex, multichain enzyme responsible for most of the replicative synthesis in bacteria. This DNA polymerase also exhibits 3' to 5' exonuclease activity (By similarity).</text>
</comment>
<comment type="catalytic activity">
    <reaction>
        <text>DNA(n) + a 2'-deoxyribonucleoside 5'-triphosphate = DNA(n+1) + diphosphate</text>
        <dbReference type="Rhea" id="RHEA:22508"/>
        <dbReference type="Rhea" id="RHEA-COMP:17339"/>
        <dbReference type="Rhea" id="RHEA-COMP:17340"/>
        <dbReference type="ChEBI" id="CHEBI:33019"/>
        <dbReference type="ChEBI" id="CHEBI:61560"/>
        <dbReference type="ChEBI" id="CHEBI:173112"/>
        <dbReference type="EC" id="2.7.7.7"/>
    </reaction>
</comment>
<comment type="subunit">
    <text evidence="1">DNA polymerase III contains a core (composed of alpha, epsilon and theta chains) that associates with a tau subunit. This core dimerizes to form the POLIII' complex. PolIII' associates with the gamma complex (composed of gamma, delta, delta', psi and chi chains) and with the beta chain to form the complete DNA polymerase III complex (By similarity).</text>
</comment>
<comment type="similarity">
    <text evidence="5">Belongs to the DnaX/STICHEL family.</text>
</comment>
<accession>P9WNT8</accession>
<accession>L0TF21</accession>
<accession>O69688</accession>
<accession>P63975</accession>
<name>DPO3X_MYCTO</name>
<proteinExistence type="inferred from homology"/>
<protein>
    <recommendedName>
        <fullName>DNA polymerase III subunit gamma/tau</fullName>
        <ecNumber>2.7.7.7</ecNumber>
    </recommendedName>
</protein>